<proteinExistence type="evidence at protein level"/>
<name>CLC14_MOUSE</name>
<evidence type="ECO:0000255" key="1"/>
<evidence type="ECO:0000255" key="2">
    <source>
        <dbReference type="PROSITE-ProRule" id="PRU00040"/>
    </source>
</evidence>
<evidence type="ECO:0000305" key="3"/>
<evidence type="ECO:0007744" key="4">
    <source>
    </source>
</evidence>
<keyword id="KW-1015">Disulfide bond</keyword>
<keyword id="KW-0245">EGF-like domain</keyword>
<keyword id="KW-0325">Glycoprotein</keyword>
<keyword id="KW-0430">Lectin</keyword>
<keyword id="KW-0472">Membrane</keyword>
<keyword id="KW-0597">Phosphoprotein</keyword>
<keyword id="KW-1185">Reference proteome</keyword>
<keyword id="KW-0732">Signal</keyword>
<keyword id="KW-0812">Transmembrane</keyword>
<keyword id="KW-1133">Transmembrane helix</keyword>
<reference key="1">
    <citation type="journal article" date="2005" name="Science">
        <title>The transcriptional landscape of the mammalian genome.</title>
        <authorList>
            <person name="Carninci P."/>
            <person name="Kasukawa T."/>
            <person name="Katayama S."/>
            <person name="Gough J."/>
            <person name="Frith M.C."/>
            <person name="Maeda N."/>
            <person name="Oyama R."/>
            <person name="Ravasi T."/>
            <person name="Lenhard B."/>
            <person name="Wells C."/>
            <person name="Kodzius R."/>
            <person name="Shimokawa K."/>
            <person name="Bajic V.B."/>
            <person name="Brenner S.E."/>
            <person name="Batalov S."/>
            <person name="Forrest A.R."/>
            <person name="Zavolan M."/>
            <person name="Davis M.J."/>
            <person name="Wilming L.G."/>
            <person name="Aidinis V."/>
            <person name="Allen J.E."/>
            <person name="Ambesi-Impiombato A."/>
            <person name="Apweiler R."/>
            <person name="Aturaliya R.N."/>
            <person name="Bailey T.L."/>
            <person name="Bansal M."/>
            <person name="Baxter L."/>
            <person name="Beisel K.W."/>
            <person name="Bersano T."/>
            <person name="Bono H."/>
            <person name="Chalk A.M."/>
            <person name="Chiu K.P."/>
            <person name="Choudhary V."/>
            <person name="Christoffels A."/>
            <person name="Clutterbuck D.R."/>
            <person name="Crowe M.L."/>
            <person name="Dalla E."/>
            <person name="Dalrymple B.P."/>
            <person name="de Bono B."/>
            <person name="Della Gatta G."/>
            <person name="di Bernardo D."/>
            <person name="Down T."/>
            <person name="Engstrom P."/>
            <person name="Fagiolini M."/>
            <person name="Faulkner G."/>
            <person name="Fletcher C.F."/>
            <person name="Fukushima T."/>
            <person name="Furuno M."/>
            <person name="Futaki S."/>
            <person name="Gariboldi M."/>
            <person name="Georgii-Hemming P."/>
            <person name="Gingeras T.R."/>
            <person name="Gojobori T."/>
            <person name="Green R.E."/>
            <person name="Gustincich S."/>
            <person name="Harbers M."/>
            <person name="Hayashi Y."/>
            <person name="Hensch T.K."/>
            <person name="Hirokawa N."/>
            <person name="Hill D."/>
            <person name="Huminiecki L."/>
            <person name="Iacono M."/>
            <person name="Ikeo K."/>
            <person name="Iwama A."/>
            <person name="Ishikawa T."/>
            <person name="Jakt M."/>
            <person name="Kanapin A."/>
            <person name="Katoh M."/>
            <person name="Kawasawa Y."/>
            <person name="Kelso J."/>
            <person name="Kitamura H."/>
            <person name="Kitano H."/>
            <person name="Kollias G."/>
            <person name="Krishnan S.P."/>
            <person name="Kruger A."/>
            <person name="Kummerfeld S.K."/>
            <person name="Kurochkin I.V."/>
            <person name="Lareau L.F."/>
            <person name="Lazarevic D."/>
            <person name="Lipovich L."/>
            <person name="Liu J."/>
            <person name="Liuni S."/>
            <person name="McWilliam S."/>
            <person name="Madan Babu M."/>
            <person name="Madera M."/>
            <person name="Marchionni L."/>
            <person name="Matsuda H."/>
            <person name="Matsuzawa S."/>
            <person name="Miki H."/>
            <person name="Mignone F."/>
            <person name="Miyake S."/>
            <person name="Morris K."/>
            <person name="Mottagui-Tabar S."/>
            <person name="Mulder N."/>
            <person name="Nakano N."/>
            <person name="Nakauchi H."/>
            <person name="Ng P."/>
            <person name="Nilsson R."/>
            <person name="Nishiguchi S."/>
            <person name="Nishikawa S."/>
            <person name="Nori F."/>
            <person name="Ohara O."/>
            <person name="Okazaki Y."/>
            <person name="Orlando V."/>
            <person name="Pang K.C."/>
            <person name="Pavan W.J."/>
            <person name="Pavesi G."/>
            <person name="Pesole G."/>
            <person name="Petrovsky N."/>
            <person name="Piazza S."/>
            <person name="Reed J."/>
            <person name="Reid J.F."/>
            <person name="Ring B.Z."/>
            <person name="Ringwald M."/>
            <person name="Rost B."/>
            <person name="Ruan Y."/>
            <person name="Salzberg S.L."/>
            <person name="Sandelin A."/>
            <person name="Schneider C."/>
            <person name="Schoenbach C."/>
            <person name="Sekiguchi K."/>
            <person name="Semple C.A."/>
            <person name="Seno S."/>
            <person name="Sessa L."/>
            <person name="Sheng Y."/>
            <person name="Shibata Y."/>
            <person name="Shimada H."/>
            <person name="Shimada K."/>
            <person name="Silva D."/>
            <person name="Sinclair B."/>
            <person name="Sperling S."/>
            <person name="Stupka E."/>
            <person name="Sugiura K."/>
            <person name="Sultana R."/>
            <person name="Takenaka Y."/>
            <person name="Taki K."/>
            <person name="Tammoja K."/>
            <person name="Tan S.L."/>
            <person name="Tang S."/>
            <person name="Taylor M.S."/>
            <person name="Tegner J."/>
            <person name="Teichmann S.A."/>
            <person name="Ueda H.R."/>
            <person name="van Nimwegen E."/>
            <person name="Verardo R."/>
            <person name="Wei C.L."/>
            <person name="Yagi K."/>
            <person name="Yamanishi H."/>
            <person name="Zabarovsky E."/>
            <person name="Zhu S."/>
            <person name="Zimmer A."/>
            <person name="Hide W."/>
            <person name="Bult C."/>
            <person name="Grimmond S.M."/>
            <person name="Teasdale R.D."/>
            <person name="Liu E.T."/>
            <person name="Brusic V."/>
            <person name="Quackenbush J."/>
            <person name="Wahlestedt C."/>
            <person name="Mattick J.S."/>
            <person name="Hume D.A."/>
            <person name="Kai C."/>
            <person name="Sasaki D."/>
            <person name="Tomaru Y."/>
            <person name="Fukuda S."/>
            <person name="Kanamori-Katayama M."/>
            <person name="Suzuki M."/>
            <person name="Aoki J."/>
            <person name="Arakawa T."/>
            <person name="Iida J."/>
            <person name="Imamura K."/>
            <person name="Itoh M."/>
            <person name="Kato T."/>
            <person name="Kawaji H."/>
            <person name="Kawagashira N."/>
            <person name="Kawashima T."/>
            <person name="Kojima M."/>
            <person name="Kondo S."/>
            <person name="Konno H."/>
            <person name="Nakano K."/>
            <person name="Ninomiya N."/>
            <person name="Nishio T."/>
            <person name="Okada M."/>
            <person name="Plessy C."/>
            <person name="Shibata K."/>
            <person name="Shiraki T."/>
            <person name="Suzuki S."/>
            <person name="Tagami M."/>
            <person name="Waki K."/>
            <person name="Watahiki A."/>
            <person name="Okamura-Oho Y."/>
            <person name="Suzuki H."/>
            <person name="Kawai J."/>
            <person name="Hayashizaki Y."/>
        </authorList>
    </citation>
    <scope>NUCLEOTIDE SEQUENCE [LARGE SCALE MRNA]</scope>
    <source>
        <strain>C57BL/6J</strain>
        <tissue>Embryonic lung</tissue>
        <tissue>Head</tissue>
        <tissue>Lung</tissue>
        <tissue>Stomach</tissue>
    </source>
</reference>
<reference key="2">
    <citation type="journal article" date="2004" name="Genome Res.">
        <title>The status, quality, and expansion of the NIH full-length cDNA project: the Mammalian Gene Collection (MGC).</title>
        <authorList>
            <consortium name="The MGC Project Team"/>
        </authorList>
    </citation>
    <scope>NUCLEOTIDE SEQUENCE [LARGE SCALE MRNA]</scope>
    <source>
        <tissue>Colon</tissue>
    </source>
</reference>
<reference key="3">
    <citation type="journal article" date="2010" name="Cell">
        <title>A tissue-specific atlas of mouse protein phosphorylation and expression.</title>
        <authorList>
            <person name="Huttlin E.L."/>
            <person name="Jedrychowski M.P."/>
            <person name="Elias J.E."/>
            <person name="Goswami T."/>
            <person name="Rad R."/>
            <person name="Beausoleil S.A."/>
            <person name="Villen J."/>
            <person name="Haas W."/>
            <person name="Sowa M.E."/>
            <person name="Gygi S.P."/>
        </authorList>
    </citation>
    <scope>PHOSPHORYLATION [LARGE SCALE ANALYSIS] AT SER-440</scope>
    <scope>IDENTIFICATION BY MASS SPECTROMETRY [LARGE SCALE ANALYSIS]</scope>
    <source>
        <tissue>Heart</tissue>
        <tissue>Kidney</tissue>
        <tissue>Lung</tissue>
    </source>
</reference>
<accession>Q8VCP9</accession>
<accession>Q3TP72</accession>
<accession>Q9CXA8</accession>
<accession>Q9D624</accession>
<accession>Q9DC55</accession>
<gene>
    <name type="primary">Clec14a</name>
</gene>
<dbReference type="EMBL" id="AK004557">
    <property type="protein sequence ID" value="BAB23370.2"/>
    <property type="molecule type" value="mRNA"/>
</dbReference>
<dbReference type="EMBL" id="AK014681">
    <property type="protein sequence ID" value="BAB29502.1"/>
    <property type="molecule type" value="mRNA"/>
</dbReference>
<dbReference type="EMBL" id="AK018432">
    <property type="protein sequence ID" value="BAB31209.1"/>
    <property type="molecule type" value="mRNA"/>
</dbReference>
<dbReference type="EMBL" id="AK033733">
    <property type="protein sequence ID" value="BAC28454.1"/>
    <property type="molecule type" value="mRNA"/>
</dbReference>
<dbReference type="EMBL" id="AK045596">
    <property type="protein sequence ID" value="BAC32430.1"/>
    <property type="molecule type" value="mRNA"/>
</dbReference>
<dbReference type="EMBL" id="AK080201">
    <property type="protein sequence ID" value="BAC37846.1"/>
    <property type="molecule type" value="mRNA"/>
</dbReference>
<dbReference type="EMBL" id="AK164665">
    <property type="protein sequence ID" value="BAE37865.1"/>
    <property type="molecule type" value="mRNA"/>
</dbReference>
<dbReference type="EMBL" id="BC019452">
    <property type="protein sequence ID" value="AAH19452.1"/>
    <property type="molecule type" value="mRNA"/>
</dbReference>
<dbReference type="CCDS" id="CCDS25930.1"/>
<dbReference type="RefSeq" id="NP_080085.3">
    <property type="nucleotide sequence ID" value="NM_025809.5"/>
</dbReference>
<dbReference type="SMR" id="Q8VCP9"/>
<dbReference type="FunCoup" id="Q8VCP9">
    <property type="interactions" value="74"/>
</dbReference>
<dbReference type="STRING" id="10090.ENSMUSP00000054451"/>
<dbReference type="GlyCosmos" id="Q8VCP9">
    <property type="glycosylation" value="4 sites, No reported glycans"/>
</dbReference>
<dbReference type="GlyGen" id="Q8VCP9">
    <property type="glycosylation" value="5 sites, 1 N-linked glycan (1 site)"/>
</dbReference>
<dbReference type="iPTMnet" id="Q8VCP9"/>
<dbReference type="PhosphoSitePlus" id="Q8VCP9"/>
<dbReference type="PaxDb" id="10090-ENSMUSP00000054451"/>
<dbReference type="PeptideAtlas" id="Q8VCP9"/>
<dbReference type="ProteomicsDB" id="279098"/>
<dbReference type="Antibodypedia" id="23322">
    <property type="antibodies" value="238 antibodies from 29 providers"/>
</dbReference>
<dbReference type="DNASU" id="66864"/>
<dbReference type="Ensembl" id="ENSMUST00000062254.4">
    <property type="protein sequence ID" value="ENSMUSP00000054451.3"/>
    <property type="gene ID" value="ENSMUSG00000045930.4"/>
</dbReference>
<dbReference type="GeneID" id="66864"/>
<dbReference type="KEGG" id="mmu:66864"/>
<dbReference type="UCSC" id="uc007npv.2">
    <property type="organism name" value="mouse"/>
</dbReference>
<dbReference type="AGR" id="MGI:1914114"/>
<dbReference type="CTD" id="161198"/>
<dbReference type="MGI" id="MGI:1914114">
    <property type="gene designation" value="Clec14a"/>
</dbReference>
<dbReference type="VEuPathDB" id="HostDB:ENSMUSG00000045930"/>
<dbReference type="eggNOG" id="ENOG502S0KN">
    <property type="taxonomic scope" value="Eukaryota"/>
</dbReference>
<dbReference type="GeneTree" id="ENSGT00930000151088"/>
<dbReference type="HOGENOM" id="CLU_593913_0_0_1"/>
<dbReference type="InParanoid" id="Q8VCP9"/>
<dbReference type="OMA" id="ELPNCLD"/>
<dbReference type="OrthoDB" id="9890094at2759"/>
<dbReference type="PhylomeDB" id="Q8VCP9"/>
<dbReference type="TreeFam" id="TF330714"/>
<dbReference type="BioGRID-ORCS" id="66864">
    <property type="hits" value="1 hit in 77 CRISPR screens"/>
</dbReference>
<dbReference type="PRO" id="PR:Q8VCP9"/>
<dbReference type="Proteomes" id="UP000000589">
    <property type="component" value="Chromosome 12"/>
</dbReference>
<dbReference type="RNAct" id="Q8VCP9">
    <property type="molecule type" value="protein"/>
</dbReference>
<dbReference type="Bgee" id="ENSMUSG00000045930">
    <property type="expression patterns" value="Expressed in brain blood vessel and 179 other cell types or tissues"/>
</dbReference>
<dbReference type="GO" id="GO:0062023">
    <property type="term" value="C:collagen-containing extracellular matrix"/>
    <property type="evidence" value="ECO:0007005"/>
    <property type="project" value="BHF-UCL"/>
</dbReference>
<dbReference type="GO" id="GO:0009897">
    <property type="term" value="C:external side of plasma membrane"/>
    <property type="evidence" value="ECO:0000266"/>
    <property type="project" value="MGI"/>
</dbReference>
<dbReference type="GO" id="GO:0030246">
    <property type="term" value="F:carbohydrate binding"/>
    <property type="evidence" value="ECO:0007669"/>
    <property type="project" value="UniProtKB-KW"/>
</dbReference>
<dbReference type="GO" id="GO:1990430">
    <property type="term" value="F:extracellular matrix protein binding"/>
    <property type="evidence" value="ECO:0000266"/>
    <property type="project" value="MGI"/>
</dbReference>
<dbReference type="GO" id="GO:0002042">
    <property type="term" value="P:cell migration involved in sprouting angiogenesis"/>
    <property type="evidence" value="ECO:0000315"/>
    <property type="project" value="MGI"/>
</dbReference>
<dbReference type="GO" id="GO:0001946">
    <property type="term" value="P:lymphangiogenesis"/>
    <property type="evidence" value="ECO:0000315"/>
    <property type="project" value="MGI"/>
</dbReference>
<dbReference type="GO" id="GO:0002040">
    <property type="term" value="P:sprouting angiogenesis"/>
    <property type="evidence" value="ECO:0000315"/>
    <property type="project" value="MGI"/>
</dbReference>
<dbReference type="GO" id="GO:0036324">
    <property type="term" value="P:vascular endothelial growth factor receptor-2 signaling pathway"/>
    <property type="evidence" value="ECO:0000315"/>
    <property type="project" value="MGI"/>
</dbReference>
<dbReference type="GO" id="GO:0036325">
    <property type="term" value="P:vascular endothelial growth factor receptor-3 signaling pathway"/>
    <property type="evidence" value="ECO:0000315"/>
    <property type="project" value="MGI"/>
</dbReference>
<dbReference type="FunFam" id="3.10.100.10:FF:000084">
    <property type="entry name" value="C-type lectin domain family 14 member A"/>
    <property type="match status" value="1"/>
</dbReference>
<dbReference type="Gene3D" id="2.10.25.10">
    <property type="entry name" value="Laminin"/>
    <property type="match status" value="1"/>
</dbReference>
<dbReference type="Gene3D" id="3.10.100.10">
    <property type="entry name" value="Mannose-Binding Protein A, subunit A"/>
    <property type="match status" value="1"/>
</dbReference>
<dbReference type="InterPro" id="IPR001304">
    <property type="entry name" value="C-type_lectin-like"/>
</dbReference>
<dbReference type="InterPro" id="IPR016186">
    <property type="entry name" value="C-type_lectin-like/link_sf"/>
</dbReference>
<dbReference type="InterPro" id="IPR051505">
    <property type="entry name" value="C-type_lectin_domain"/>
</dbReference>
<dbReference type="InterPro" id="IPR016187">
    <property type="entry name" value="CTDL_fold"/>
</dbReference>
<dbReference type="PANTHER" id="PTHR14789:SF5">
    <property type="entry name" value="C-TYPE LECTIN DOMAIN FAMILY 14 MEMBER A"/>
    <property type="match status" value="1"/>
</dbReference>
<dbReference type="PANTHER" id="PTHR14789">
    <property type="entry name" value="CHONDROLECTIN VARIANT CHODLFDELTAE"/>
    <property type="match status" value="1"/>
</dbReference>
<dbReference type="SMART" id="SM00034">
    <property type="entry name" value="CLECT"/>
    <property type="match status" value="1"/>
</dbReference>
<dbReference type="SUPFAM" id="SSF56436">
    <property type="entry name" value="C-type lectin-like"/>
    <property type="match status" value="1"/>
</dbReference>
<dbReference type="SUPFAM" id="SSF57196">
    <property type="entry name" value="EGF/Laminin"/>
    <property type="match status" value="1"/>
</dbReference>
<dbReference type="PROSITE" id="PS00010">
    <property type="entry name" value="ASX_HYDROXYL"/>
    <property type="match status" value="1"/>
</dbReference>
<dbReference type="PROSITE" id="PS50041">
    <property type="entry name" value="C_TYPE_LECTIN_2"/>
    <property type="match status" value="1"/>
</dbReference>
<dbReference type="PROSITE" id="PS01186">
    <property type="entry name" value="EGF_2"/>
    <property type="match status" value="1"/>
</dbReference>
<organism>
    <name type="scientific">Mus musculus</name>
    <name type="common">Mouse</name>
    <dbReference type="NCBI Taxonomy" id="10090"/>
    <lineage>
        <taxon>Eukaryota</taxon>
        <taxon>Metazoa</taxon>
        <taxon>Chordata</taxon>
        <taxon>Craniata</taxon>
        <taxon>Vertebrata</taxon>
        <taxon>Euteleostomi</taxon>
        <taxon>Mammalia</taxon>
        <taxon>Eutheria</taxon>
        <taxon>Euarchontoglires</taxon>
        <taxon>Glires</taxon>
        <taxon>Rodentia</taxon>
        <taxon>Myomorpha</taxon>
        <taxon>Muroidea</taxon>
        <taxon>Muridae</taxon>
        <taxon>Murinae</taxon>
        <taxon>Mus</taxon>
        <taxon>Mus</taxon>
    </lineage>
</organism>
<protein>
    <recommendedName>
        <fullName>C-type lectin domain family 14 member A</fullName>
    </recommendedName>
</protein>
<feature type="signal peptide" evidence="1">
    <location>
        <begin position="1"/>
        <end position="21"/>
    </location>
</feature>
<feature type="chain" id="PRO_0000017378" description="C-type lectin domain family 14 member A">
    <location>
        <begin position="22"/>
        <end position="459"/>
    </location>
</feature>
<feature type="topological domain" description="Extracellular" evidence="1">
    <location>
        <begin position="22"/>
        <end position="386"/>
    </location>
</feature>
<feature type="transmembrane region" description="Helical" evidence="1">
    <location>
        <begin position="387"/>
        <end position="407"/>
    </location>
</feature>
<feature type="topological domain" description="Cytoplasmic" evidence="1">
    <location>
        <begin position="408"/>
        <end position="459"/>
    </location>
</feature>
<feature type="domain" description="C-type lectin" evidence="2">
    <location>
        <begin position="33"/>
        <end position="173"/>
    </location>
</feature>
<feature type="domain" description="EGF-like">
    <location>
        <begin position="246"/>
        <end position="288"/>
    </location>
</feature>
<feature type="modified residue" description="Phosphoserine" evidence="4">
    <location>
        <position position="440"/>
    </location>
</feature>
<feature type="glycosylation site" description="N-linked (GlcNAc...) asparagine" evidence="1">
    <location>
        <position position="189"/>
    </location>
</feature>
<feature type="glycosylation site" description="N-linked (GlcNAc...) asparagine" evidence="1">
    <location>
        <position position="306"/>
    </location>
</feature>
<feature type="glycosylation site" description="N-linked (GlcNAc...) asparagine" evidence="1">
    <location>
        <position position="317"/>
    </location>
</feature>
<feature type="glycosylation site" description="N-linked (GlcNAc...) asparagine" evidence="1">
    <location>
        <position position="370"/>
    </location>
</feature>
<feature type="disulfide bond" evidence="2">
    <location>
        <begin position="143"/>
        <end position="162"/>
    </location>
</feature>
<feature type="sequence conflict" description="In Ref. 1; BAB31209." evidence="3" ref="1">
    <original>A</original>
    <variation>R</variation>
    <location>
        <position position="30"/>
    </location>
</feature>
<feature type="sequence conflict" description="In Ref. 1; BAB23370." evidence="3" ref="1">
    <original>T</original>
    <variation>P</variation>
    <location>
        <position position="44"/>
    </location>
</feature>
<feature type="sequence conflict" description="In Ref. 2; AAH19452." evidence="3" ref="2">
    <original>T</original>
    <variation>A</variation>
    <location>
        <position position="166"/>
    </location>
</feature>
<feature type="sequence conflict" description="In Ref. 2; AAH19452." evidence="3" ref="2">
    <original>I</original>
    <variation>V</variation>
    <location>
        <position position="349"/>
    </location>
</feature>
<feature type="sequence conflict" description="In Ref. 1; BAB23370." evidence="3" ref="1">
    <original>S</original>
    <variation>C</variation>
    <location>
        <position position="384"/>
    </location>
</feature>
<sequence>MRPALALCLLCPAFWPRPGNGEHPTADRAACSASGACYSLHHATFKRRAAEEACSLRGGTLSTVHSGSEFQAVLLLLRAGPGPGGGSKDLLFWVALERSISQCTQEKEPLRGFSWLHPDSEDSEDSPLPWVEEPQRSCTVRKCAALQATRGVEPAGWKEMRCHLRTDGYLCKYQFEVLCPAPRPGAASNLSFQAPFRLSSSALDFSPPGTEVSAMCPGDLSVSSTCIQEETSAHWDGLFPGTVLCPCSGRYLLAGKCVELPDCLDHLGDFTCECAVGFELGKDGRSCETKVEEQLTLEGTKLPTRNVTATPAGAVTNRTWPGQVYDKPGEMPQVTEILQWGTQSTLPTIQKTPQTKPKVTGTPSGSVVLNYTSSPPVSLTFDTSSTVVFILVSIAVIVLVVLTITVLGLFKLCFHKSRSSRTGKGALDSPGVECDAEATSLHHSSTQCTDIGVKSGTVA</sequence>
<comment type="subcellular location">
    <subcellularLocation>
        <location evidence="3">Membrane</location>
        <topology evidence="3">Single-pass type I membrane protein</topology>
    </subcellularLocation>
</comment>